<dbReference type="EC" id="2.5.1.123" evidence="2"/>
<dbReference type="EMBL" id="AM384985">
    <property type="protein sequence ID" value="CAL34104.1"/>
    <property type="molecule type" value="Genomic_DNA"/>
</dbReference>
<dbReference type="SMR" id="A2AXG5"/>
<dbReference type="KEGG" id="ag:CAL34104"/>
<dbReference type="BRENDA" id="2.5.1.123">
    <property type="organism ID" value="5996"/>
</dbReference>
<dbReference type="GO" id="GO:0004659">
    <property type="term" value="F:prenyltransferase activity"/>
    <property type="evidence" value="ECO:0007669"/>
    <property type="project" value="UniProtKB-KW"/>
</dbReference>
<dbReference type="CDD" id="cd13931">
    <property type="entry name" value="PT-CloQ_NphB"/>
    <property type="match status" value="1"/>
</dbReference>
<dbReference type="InterPro" id="IPR033964">
    <property type="entry name" value="Aro_prenylTrfase"/>
</dbReference>
<dbReference type="InterPro" id="IPR020965">
    <property type="entry name" value="Prenyltransferase_CloQ"/>
</dbReference>
<dbReference type="InterPro" id="IPR036239">
    <property type="entry name" value="PrenylTrfase-like_sf"/>
</dbReference>
<dbReference type="Pfam" id="PF11468">
    <property type="entry name" value="PTase_Orf2"/>
    <property type="match status" value="1"/>
</dbReference>
<dbReference type="SFLD" id="SFLDS00036">
    <property type="entry name" value="Aromatic_Prenyltransferase"/>
    <property type="match status" value="1"/>
</dbReference>
<dbReference type="SFLD" id="SFLDG01163">
    <property type="entry name" value="II"/>
    <property type="match status" value="1"/>
</dbReference>
<dbReference type="SUPFAM" id="SSF143492">
    <property type="entry name" value="Prenyltransferase-like"/>
    <property type="match status" value="1"/>
</dbReference>
<feature type="chain" id="PRO_0000430680" description="Flaviolin linalyltransferase">
    <location>
        <begin position="1"/>
        <end position="300"/>
    </location>
</feature>
<name>FNQ26_STRVG</name>
<protein>
    <recommendedName>
        <fullName evidence="4">Flaviolin linalyltransferase</fullName>
        <ecNumber evidence="2">2.5.1.123</ecNumber>
    </recommendedName>
</protein>
<reference key="1">
    <citation type="journal article" date="2006" name="ChemBioChem">
        <title>A gene cluster for prenylated naphthoquinone and prenylated phenazine biosynthesis in Streptomyces cinnamonensis DSM 1042.</title>
        <authorList>
            <person name="Haagen Y."/>
            <person name="Gluck K."/>
            <person name="Fay K."/>
            <person name="Kammerer B."/>
            <person name="Gust B."/>
            <person name="Heide L."/>
        </authorList>
    </citation>
    <scope>NUCLEOTIDE SEQUENCE [GENOMIC DNA]</scope>
    <scope>FUNCTION IN FNQ I BIOSYNTHESIS</scope>
    <scope>DISRUPTION PHENOTYPE</scope>
    <source>
        <strain>DSM 1042</strain>
    </source>
</reference>
<reference key="2">
    <citation type="journal article" date="2007" name="FEBS Lett.">
        <title>A soluble, magnesium-independent prenyltransferase catalyzes reverse and regular C-prenylations and O-prenylations of aromatic substrates.</title>
        <authorList>
            <person name="Haagen Y."/>
            <person name="Unsoeld I."/>
            <person name="Westrich L."/>
            <person name="Gust B."/>
            <person name="Richard S.B."/>
            <person name="Noel J.P."/>
            <person name="Heide L."/>
        </authorList>
    </citation>
    <scope>FUNCTION</scope>
    <scope>CATALYTIC ACTIVITY</scope>
    <scope>ACTIVITY REGULATION</scope>
    <scope>BIOPHYSICOCHEMICAL PROPERTIES</scope>
    <scope>SUBUNIT</scope>
    <source>
        <strain>DSM 1042</strain>
    </source>
</reference>
<sequence>MMSGTADLAGVYAAVEESAGLLDVSCAREKVWPILAAFEDVLPTAVIAFRVATNARHEGEFDCRFTVPGSIDPYAVALDKGLTHRSGHPIETLVADVQKHCAVDSYGVDFGVVGGFKKIWVYFPGGRHESLAHLGEIPSMPPGLAATEGFFARYGLADKVDLIGVDYASKTMNVYFAASPEVVSAPTVLAMHREIGLPDPSEQMLDFCSRAFGVYTTLNWDSSKVERIAYSVKTEDPLELSARLGSKVEQFLKSVPYGIDTPKMVYAAVTAGGEEYYKLQSYYQWRTDSRLNLSYIGGRS</sequence>
<evidence type="ECO:0000269" key="1">
    <source>
    </source>
</evidence>
<evidence type="ECO:0000269" key="2">
    <source>
    </source>
</evidence>
<evidence type="ECO:0000303" key="3">
    <source>
    </source>
</evidence>
<evidence type="ECO:0000305" key="4"/>
<keyword id="KW-0637">Prenyltransferase</keyword>
<keyword id="KW-0808">Transferase</keyword>
<proteinExistence type="evidence at protein level"/>
<gene>
    <name evidence="3" type="primary">fnq26</name>
</gene>
<accession>A2AXG5</accession>
<organism>
    <name type="scientific">Streptomyces virginiae</name>
    <name type="common">Streptomyces cinnamonensis</name>
    <dbReference type="NCBI Taxonomy" id="1961"/>
    <lineage>
        <taxon>Bacteria</taxon>
        <taxon>Bacillati</taxon>
        <taxon>Actinomycetota</taxon>
        <taxon>Actinomycetes</taxon>
        <taxon>Kitasatosporales</taxon>
        <taxon>Streptomycetaceae</taxon>
        <taxon>Streptomyces</taxon>
    </lineage>
</organism>
<comment type="function">
    <text evidence="1 2">Involved in the biosynthesis of furanonaphthoquinone I (FNQ I). Catalyzes C- and O-prenylations of different phenolic substrates. With flaviolin as substrate, catalyzes the formation of a carbon-carbon-bond between C-3 (rather than C-1) of geranyl diphosphate and C-3 of flaviolin. With 1,3-dihydroxynaphthalene and 4-hydroxybenzoate as substrates, catalyzes O-prenylations.</text>
</comment>
<comment type="catalytic activity">
    <reaction evidence="2">
        <text>flaviolin + (2E)-geranyl diphosphate = 3-linalylflaviolin + diphosphate</text>
        <dbReference type="Rhea" id="RHEA:17449"/>
        <dbReference type="ChEBI" id="CHEBI:33019"/>
        <dbReference type="ChEBI" id="CHEBI:58057"/>
        <dbReference type="ChEBI" id="CHEBI:58696"/>
        <dbReference type="ChEBI" id="CHEBI:78347"/>
        <dbReference type="EC" id="2.5.1.123"/>
    </reaction>
</comment>
<comment type="activity regulation">
    <text evidence="2">Does not require magnesium or any other divalent metal ions for activity.</text>
</comment>
<comment type="biophysicochemical properties">
    <kinetics>
        <KM evidence="2">21 uM for flaviolin</KM>
        <KM evidence="2">2.1 uM for geranyl diphosphate (with flaviolin as substrate)</KM>
        <KM evidence="2">1.9 mM for 1,3-dihydroxynaphthalene</KM>
        <KM evidence="2">5.6 mM for 4-hydroxybenzoate</KM>
        <text evidence="2">kcat is 0.013 min(-1) for flaviolin. kcat is 0.14 min(-1) for 4-hydroxybenzoate.</text>
    </kinetics>
</comment>
<comment type="subunit">
    <text evidence="2">Monomer.</text>
</comment>
<comment type="disruption phenotype">
    <text evidence="1">Mutant still produces endophenazine A, but does not produce FNQ I.</text>
</comment>
<comment type="similarity">
    <text evidence="4">Belongs to the aromatic prenyltransferase family.</text>
</comment>